<sequence length="330" mass="35426">MIWTGLLVGFLFGIVLQRGRICFNSAFRDVLLFKDNYLFKLAVFTLALEMILFVLLSQVGLMQMNPKPLNLVGNIIGGFVFGLGMVLAGGCASGVTYRVGEGLTTAWFAALFYGLGAYATKSGAFSWWLSWVGQFKSPLSVEESAYYVKGAGPTISSVLGLNPWIPALVIAALFILWAFGTKTTSRETKFNWKIASVCLALVAGLGFITSTLSGRKYGLGITGGWINLFQGFLTNSPLNWEGLEIVGIILGAGVAAAVAGEFKLRMPKNPVTYLQVGIGGLLMGIGAVTAGGCNIGHFLTGVPQLALSSWLASIFFILGNWTMAWILFRR</sequence>
<dbReference type="EMBL" id="CP002903">
    <property type="protein sequence ID" value="AEJ61011.1"/>
    <property type="molecule type" value="Genomic_DNA"/>
</dbReference>
<dbReference type="RefSeq" id="WP_014624389.1">
    <property type="nucleotide sequence ID" value="NC_017583.1"/>
</dbReference>
<dbReference type="PDB" id="6LEO">
    <property type="method" value="X-ray"/>
    <property type="resolution" value="2.52 A"/>
    <property type="chains" value="A=1-328"/>
</dbReference>
<dbReference type="PDB" id="6LEP">
    <property type="method" value="X-ray"/>
    <property type="resolution" value="2.60 A"/>
    <property type="chains" value="A=1-328"/>
</dbReference>
<dbReference type="PDB" id="8J4C">
    <property type="method" value="X-ray"/>
    <property type="resolution" value="3.34 A"/>
    <property type="chains" value="A/B=3-330"/>
</dbReference>
<dbReference type="PDB" id="8K1R">
    <property type="method" value="X-ray"/>
    <property type="resolution" value="2.60 A"/>
    <property type="chains" value="A/B=1-330"/>
</dbReference>
<dbReference type="PDBsum" id="6LEO"/>
<dbReference type="PDBsum" id="6LEP"/>
<dbReference type="PDBsum" id="8J4C"/>
<dbReference type="PDBsum" id="8K1R"/>
<dbReference type="SMR" id="G0GAP6"/>
<dbReference type="STRING" id="869211.Spith_0734"/>
<dbReference type="KEGG" id="stq:Spith_0734"/>
<dbReference type="HOGENOM" id="CLU_050656_0_1_12"/>
<dbReference type="OrthoDB" id="9794165at2"/>
<dbReference type="Proteomes" id="UP000007254">
    <property type="component" value="Chromosome"/>
</dbReference>
<dbReference type="GO" id="GO:0005886">
    <property type="term" value="C:plasma membrane"/>
    <property type="evidence" value="ECO:0007669"/>
    <property type="project" value="UniProtKB-SubCell"/>
</dbReference>
<dbReference type="InterPro" id="IPR007272">
    <property type="entry name" value="Sulf_transp_TsuA/YedE"/>
</dbReference>
<dbReference type="PANTHER" id="PTHR30574">
    <property type="entry name" value="INNER MEMBRANE PROTEIN YEDE"/>
    <property type="match status" value="1"/>
</dbReference>
<dbReference type="PANTHER" id="PTHR30574:SF1">
    <property type="entry name" value="SULPHUR TRANSPORT DOMAIN-CONTAINING PROTEIN"/>
    <property type="match status" value="1"/>
</dbReference>
<dbReference type="Pfam" id="PF04143">
    <property type="entry name" value="Sulf_transp"/>
    <property type="match status" value="1"/>
</dbReference>
<organism>
    <name type="scientific">Spirochaeta thermophila (strain ATCC 700085 / DSM 6578 / Z-1203)</name>
    <dbReference type="NCBI Taxonomy" id="869211"/>
    <lineage>
        <taxon>Bacteria</taxon>
        <taxon>Pseudomonadati</taxon>
        <taxon>Spirochaetota</taxon>
        <taxon>Spirochaetia</taxon>
        <taxon>Spirochaetales</taxon>
        <taxon>Spirochaetaceae</taxon>
        <taxon>Spirochaeta</taxon>
    </lineage>
</organism>
<proteinExistence type="evidence at protein level"/>
<feature type="chain" id="PRO_0000458743" description="Thiosulfate transporter TsuA">
    <location>
        <begin position="1"/>
        <end position="330"/>
    </location>
</feature>
<feature type="topological domain" description="Periplasmic" evidence="2 6 7">
    <location>
        <begin position="1"/>
        <end position="2"/>
    </location>
</feature>
<feature type="transmembrane region" description="Helical" evidence="2 6 7">
    <location>
        <begin position="3"/>
        <end position="18"/>
    </location>
</feature>
<feature type="topological domain" description="Cytoplasmic" evidence="2 6 7">
    <location>
        <begin position="19"/>
        <end position="36"/>
    </location>
</feature>
<feature type="transmembrane region" description="Helical" evidence="2 6 7">
    <location>
        <begin position="37"/>
        <end position="59"/>
    </location>
</feature>
<feature type="topological domain" description="Periplasmic" evidence="2 6 7">
    <location>
        <begin position="60"/>
        <end position="70"/>
    </location>
</feature>
<feature type="transmembrane region" description="Helical" evidence="2 6 7">
    <location>
        <begin position="71"/>
        <end position="87"/>
    </location>
</feature>
<feature type="topological domain" description="Cytoplasmic" evidence="2 6 7">
    <location>
        <begin position="88"/>
        <end position="102"/>
    </location>
</feature>
<feature type="transmembrane region" description="Helical" evidence="2 6 7">
    <location>
        <begin position="103"/>
        <end position="121"/>
    </location>
</feature>
<feature type="topological domain" description="Periplasmic" evidence="2 6 7">
    <location>
        <begin position="122"/>
        <end position="162"/>
    </location>
</feature>
<feature type="transmembrane region" description="Helical" evidence="2 6 7">
    <location>
        <begin position="163"/>
        <end position="180"/>
    </location>
</feature>
<feature type="topological domain" description="Cytoplasmic" evidence="2 6 7">
    <location>
        <begin position="181"/>
        <end position="189"/>
    </location>
</feature>
<feature type="transmembrane region" description="Helical" evidence="2 6 7">
    <location>
        <begin position="190"/>
        <end position="211"/>
    </location>
</feature>
<feature type="topological domain" description="Periplasmic" evidence="2 6 7">
    <location>
        <begin position="212"/>
        <end position="239"/>
    </location>
</feature>
<feature type="transmembrane region" description="Helical" evidence="2 6 7">
    <location>
        <begin position="240"/>
        <end position="258"/>
    </location>
</feature>
<feature type="topological domain" description="Cytoplasmic" evidence="2 6 7">
    <location>
        <begin position="259"/>
        <end position="269"/>
    </location>
</feature>
<feature type="transmembrane region" description="Helical" evidence="2 6 7">
    <location>
        <begin position="270"/>
        <end position="289"/>
    </location>
</feature>
<feature type="topological domain" description="Periplasmic" evidence="2 6 7">
    <location>
        <begin position="290"/>
        <end position="306"/>
    </location>
</feature>
<feature type="transmembrane region" description="Helical" evidence="2 6 7">
    <location>
        <begin position="307"/>
        <end position="326"/>
    </location>
</feature>
<feature type="topological domain" description="Cytoplasmic" evidence="2 6 7">
    <location>
        <begin position="327"/>
        <end position="330"/>
    </location>
</feature>
<feature type="mutagenesis site" description="Can complement the growth defect of E.coli cysPUWA-tsuA deletion mutant." evidence="2">
    <original>C</original>
    <variation>A</variation>
    <location>
        <position position="22"/>
    </location>
</feature>
<feature type="mutagenesis site" description="Cannot complement the growth defect of E.coli cysPUWA-tsuA deletion mutant." evidence="2">
    <original>C</original>
    <variation>A</variation>
    <location>
        <position position="91"/>
    </location>
</feature>
<feature type="mutagenesis site" description="Cannot complement the growth defect of E.coli cysPUWA-tsuA deletion mutant." evidence="2">
    <original>C</original>
    <variation>A</variation>
    <location>
        <position position="293"/>
    </location>
</feature>
<feature type="helix" evidence="8">
    <location>
        <begin position="4"/>
        <end position="19"/>
    </location>
</feature>
<feature type="helix" evidence="8">
    <location>
        <begin position="23"/>
        <end position="25"/>
    </location>
</feature>
<feature type="helix" evidence="8">
    <location>
        <begin position="26"/>
        <end position="32"/>
    </location>
</feature>
<feature type="helix" evidence="8">
    <location>
        <begin position="37"/>
        <end position="58"/>
    </location>
</feature>
<feature type="helix" evidence="8">
    <location>
        <begin position="71"/>
        <end position="87"/>
    </location>
</feature>
<feature type="helix" evidence="8">
    <location>
        <begin position="94"/>
        <end position="101"/>
    </location>
</feature>
<feature type="helix" evidence="8">
    <location>
        <begin position="104"/>
        <end position="122"/>
    </location>
</feature>
<feature type="helix" evidence="8">
    <location>
        <begin position="126"/>
        <end position="132"/>
    </location>
</feature>
<feature type="helix" evidence="8">
    <location>
        <begin position="133"/>
        <end position="135"/>
    </location>
</feature>
<feature type="strand" evidence="8">
    <location>
        <begin position="144"/>
        <end position="147"/>
    </location>
</feature>
<feature type="helix" evidence="8">
    <location>
        <begin position="155"/>
        <end position="159"/>
    </location>
</feature>
<feature type="helix" evidence="8">
    <location>
        <begin position="164"/>
        <end position="180"/>
    </location>
</feature>
<feature type="helix" evidence="8">
    <location>
        <begin position="192"/>
        <end position="212"/>
    </location>
</feature>
<feature type="helix" evidence="8">
    <location>
        <begin position="222"/>
        <end position="234"/>
    </location>
</feature>
<feature type="helix" evidence="8">
    <location>
        <begin position="240"/>
        <end position="258"/>
    </location>
</feature>
<feature type="helix" evidence="8">
    <location>
        <begin position="271"/>
        <end position="290"/>
    </location>
</feature>
<feature type="helix" evidence="8">
    <location>
        <begin position="294"/>
        <end position="299"/>
    </location>
</feature>
<feature type="turn" evidence="8">
    <location>
        <begin position="300"/>
        <end position="305"/>
    </location>
</feature>
<feature type="helix" evidence="8">
    <location>
        <begin position="307"/>
        <end position="327"/>
    </location>
</feature>
<reference key="1">
    <citation type="submission" date="2011-06" db="EMBL/GenBank/DDBJ databases">
        <title>The complete genome of Spirochaeta thermophila DSM 6578.</title>
        <authorList>
            <consortium name="US DOE Joint Genome Institute (JGI-PGF)"/>
            <person name="Lucas S."/>
            <person name="Lapidus A."/>
            <person name="Bruce D."/>
            <person name="Goodwin L."/>
            <person name="Pitluck S."/>
            <person name="Peters L."/>
            <person name="Kyrpides N."/>
            <person name="Mavromatis K."/>
            <person name="Ivanova N."/>
            <person name="Mikailova N."/>
            <person name="Pagani I."/>
            <person name="Chertkov O."/>
            <person name="Detter J.C."/>
            <person name="Tapia R."/>
            <person name="Han C."/>
            <person name="Land M."/>
            <person name="Hauser L."/>
            <person name="Markowitz V."/>
            <person name="Cheng J.-F."/>
            <person name="Hugenholtz P."/>
            <person name="Woyke T."/>
            <person name="Wu D."/>
            <person name="Spring S."/>
            <person name="Merkhoffer B."/>
            <person name="Schneider S."/>
            <person name="Klenk H.-P."/>
            <person name="Eisen J.A."/>
        </authorList>
    </citation>
    <scope>NUCLEOTIDE SEQUENCE [LARGE SCALE GENOMIC DNA]</scope>
    <source>
        <strain>ATCC 700085 / DSM 6578 / Z-1203</strain>
    </source>
</reference>
<reference evidence="6 7" key="2">
    <citation type="journal article" date="2020" name="Sci. Adv.">
        <title>Crystal structure of a YeeE/YedE family protein engaged in thiosulfate uptake.</title>
        <authorList>
            <person name="Tanaka Y."/>
            <person name="Yoshikaie K."/>
            <person name="Takeuchi A."/>
            <person name="Ichikawa M."/>
            <person name="Mori T."/>
            <person name="Uchino S."/>
            <person name="Sugano Y."/>
            <person name="Hakoshima T."/>
            <person name="Takagi H."/>
            <person name="Nonaka G."/>
            <person name="Tsukazaki T."/>
        </authorList>
    </citation>
    <scope>X-RAY CRYSTALLOGRAPHY (2.52 ANGSTROMS) OF 1-328 OF WILD-TYPE AND MUTANT ALA-91 IN COMPLEX WITH THIOSULFATE</scope>
    <scope>FUNCTION</scope>
    <scope>SUBCELLULAR LOCATION</scope>
    <scope>TOPOLOGY</scope>
    <scope>DOMAIN</scope>
    <scope>MUTAGENESIS OF CYS-22; CYS-91 AND CYS-293</scope>
</reference>
<gene>
    <name evidence="1" type="primary">tsuA</name>
    <name evidence="5" type="ordered locus">Spith_0734</name>
</gene>
<protein>
    <recommendedName>
        <fullName evidence="3">Thiosulfate transporter TsuA</fullName>
    </recommendedName>
</protein>
<evidence type="ECO:0000250" key="1">
    <source>
        <dbReference type="UniProtKB" id="P33015"/>
    </source>
</evidence>
<evidence type="ECO:0000269" key="2">
    <source>
    </source>
</evidence>
<evidence type="ECO:0000305" key="3"/>
<evidence type="ECO:0000305" key="4">
    <source>
    </source>
</evidence>
<evidence type="ECO:0000312" key="5">
    <source>
        <dbReference type="EMBL" id="AEJ61011.1"/>
    </source>
</evidence>
<evidence type="ECO:0007744" key="6">
    <source>
        <dbReference type="PDB" id="6LEO"/>
    </source>
</evidence>
<evidence type="ECO:0007744" key="7">
    <source>
        <dbReference type="PDB" id="6LEP"/>
    </source>
</evidence>
<evidence type="ECO:0007829" key="8">
    <source>
        <dbReference type="PDB" id="6LEO"/>
    </source>
</evidence>
<accession>G0GAP6</accession>
<keyword id="KW-0002">3D-structure</keyword>
<keyword id="KW-0997">Cell inner membrane</keyword>
<keyword id="KW-1003">Cell membrane</keyword>
<keyword id="KW-0472">Membrane</keyword>
<keyword id="KW-1185">Reference proteome</keyword>
<keyword id="KW-0764">Sulfate transport</keyword>
<keyword id="KW-0812">Transmembrane</keyword>
<keyword id="KW-1133">Transmembrane helix</keyword>
<keyword id="KW-0813">Transport</keyword>
<name>TSUA_SPITZ</name>
<comment type="function">
    <text evidence="2">Mediates thiosulfate uptake.</text>
</comment>
<comment type="catalytic activity">
    <reaction evidence="4">
        <text>thiosulfate(in) = thiosulfate(out)</text>
        <dbReference type="Rhea" id="RHEA:32807"/>
        <dbReference type="ChEBI" id="CHEBI:33542"/>
    </reaction>
    <physiologicalReaction direction="right-to-left" evidence="4">
        <dbReference type="Rhea" id="RHEA:32809"/>
    </physiologicalReaction>
</comment>
<comment type="subcellular location">
    <subcellularLocation>
        <location evidence="2">Cell inner membrane</location>
        <topology evidence="2">Multi-pass membrane protein</topology>
    </subcellularLocation>
</comment>
<comment type="domain">
    <text evidence="2">Forms an hourglass-shaped architecture, with thiosulfate in the positively charged outer concave side.</text>
</comment>
<comment type="similarity">
    <text evidence="3">Belongs to the TsuA/YedE (TC 9.B.102) family.</text>
</comment>